<protein>
    <recommendedName>
        <fullName evidence="1">Large ribosomal subunit protein bL21</fullName>
    </recommendedName>
    <alternativeName>
        <fullName evidence="3">50S ribosomal protein L21</fullName>
    </alternativeName>
</protein>
<accession>Q7VAN3</accession>
<gene>
    <name evidence="1" type="primary">rplU</name>
    <name evidence="1" type="synonym">rpl21</name>
    <name type="ordered locus">Pro_1425</name>
</gene>
<proteinExistence type="inferred from homology"/>
<comment type="function">
    <text evidence="1">This protein binds to 23S rRNA in the presence of protein L20.</text>
</comment>
<comment type="subunit">
    <text evidence="1">Part of the 50S ribosomal subunit. Contacts protein L20.</text>
</comment>
<comment type="similarity">
    <text evidence="1">Belongs to the bacterial ribosomal protein bL21 family.</text>
</comment>
<keyword id="KW-1185">Reference proteome</keyword>
<keyword id="KW-0687">Ribonucleoprotein</keyword>
<keyword id="KW-0689">Ribosomal protein</keyword>
<keyword id="KW-0694">RNA-binding</keyword>
<keyword id="KW-0699">rRNA-binding</keyword>
<reference key="1">
    <citation type="journal article" date="2003" name="Proc. Natl. Acad. Sci. U.S.A.">
        <title>Genome sequence of the cyanobacterium Prochlorococcus marinus SS120, a nearly minimal oxyphototrophic genome.</title>
        <authorList>
            <person name="Dufresne A."/>
            <person name="Salanoubat M."/>
            <person name="Partensky F."/>
            <person name="Artiguenave F."/>
            <person name="Axmann I.M."/>
            <person name="Barbe V."/>
            <person name="Duprat S."/>
            <person name="Galperin M.Y."/>
            <person name="Koonin E.V."/>
            <person name="Le Gall F."/>
            <person name="Makarova K.S."/>
            <person name="Ostrowski M."/>
            <person name="Oztas S."/>
            <person name="Robert C."/>
            <person name="Rogozin I.B."/>
            <person name="Scanlan D.J."/>
            <person name="Tandeau de Marsac N."/>
            <person name="Weissenbach J."/>
            <person name="Wincker P."/>
            <person name="Wolf Y.I."/>
            <person name="Hess W.R."/>
        </authorList>
    </citation>
    <scope>NUCLEOTIDE SEQUENCE [LARGE SCALE GENOMIC DNA]</scope>
    <source>
        <strain>SARG / CCMP1375 / SS120</strain>
    </source>
</reference>
<sequence length="152" mass="17078">MSFDFMTPNKTKNSTVGNYAIVETSGTQFWLEADRYYDIDRINANVDETVTLDKVLLINDQKGFAIGKPYIKGASVQLKVMAHKRGPKIIVYKMRPKKKTRTKNGHRQELTRVMVTSISNGEKPKKATTSAKPNTKKPSTAVKSSKVEKTPE</sequence>
<name>RL21_PROMA</name>
<evidence type="ECO:0000255" key="1">
    <source>
        <dbReference type="HAMAP-Rule" id="MF_01363"/>
    </source>
</evidence>
<evidence type="ECO:0000256" key="2">
    <source>
        <dbReference type="SAM" id="MobiDB-lite"/>
    </source>
</evidence>
<evidence type="ECO:0000305" key="3"/>
<feature type="chain" id="PRO_0000269359" description="Large ribosomal subunit protein bL21">
    <location>
        <begin position="1"/>
        <end position="152"/>
    </location>
</feature>
<feature type="region of interest" description="Disordered" evidence="2">
    <location>
        <begin position="115"/>
        <end position="152"/>
    </location>
</feature>
<feature type="compositionally biased region" description="Polar residues" evidence="2">
    <location>
        <begin position="127"/>
        <end position="143"/>
    </location>
</feature>
<dbReference type="EMBL" id="AE017126">
    <property type="protein sequence ID" value="AAQ00469.1"/>
    <property type="molecule type" value="Genomic_DNA"/>
</dbReference>
<dbReference type="RefSeq" id="NP_875816.1">
    <property type="nucleotide sequence ID" value="NC_005042.1"/>
</dbReference>
<dbReference type="SMR" id="Q7VAN3"/>
<dbReference type="STRING" id="167539.Pro_1425"/>
<dbReference type="EnsemblBacteria" id="AAQ00469">
    <property type="protein sequence ID" value="AAQ00469"/>
    <property type="gene ID" value="Pro_1425"/>
</dbReference>
<dbReference type="KEGG" id="pma:Pro_1425"/>
<dbReference type="PATRIC" id="fig|167539.5.peg.1491"/>
<dbReference type="eggNOG" id="COG0261">
    <property type="taxonomic scope" value="Bacteria"/>
</dbReference>
<dbReference type="HOGENOM" id="CLU_061463_6_0_3"/>
<dbReference type="OrthoDB" id="9813334at2"/>
<dbReference type="Proteomes" id="UP000001420">
    <property type="component" value="Chromosome"/>
</dbReference>
<dbReference type="GO" id="GO:0005737">
    <property type="term" value="C:cytoplasm"/>
    <property type="evidence" value="ECO:0007669"/>
    <property type="project" value="UniProtKB-ARBA"/>
</dbReference>
<dbReference type="GO" id="GO:1990904">
    <property type="term" value="C:ribonucleoprotein complex"/>
    <property type="evidence" value="ECO:0007669"/>
    <property type="project" value="UniProtKB-KW"/>
</dbReference>
<dbReference type="GO" id="GO:0005840">
    <property type="term" value="C:ribosome"/>
    <property type="evidence" value="ECO:0007669"/>
    <property type="project" value="UniProtKB-KW"/>
</dbReference>
<dbReference type="GO" id="GO:0019843">
    <property type="term" value="F:rRNA binding"/>
    <property type="evidence" value="ECO:0007669"/>
    <property type="project" value="UniProtKB-UniRule"/>
</dbReference>
<dbReference type="GO" id="GO:0003735">
    <property type="term" value="F:structural constituent of ribosome"/>
    <property type="evidence" value="ECO:0007669"/>
    <property type="project" value="InterPro"/>
</dbReference>
<dbReference type="GO" id="GO:0006412">
    <property type="term" value="P:translation"/>
    <property type="evidence" value="ECO:0007669"/>
    <property type="project" value="UniProtKB-UniRule"/>
</dbReference>
<dbReference type="HAMAP" id="MF_01363">
    <property type="entry name" value="Ribosomal_bL21"/>
    <property type="match status" value="1"/>
</dbReference>
<dbReference type="InterPro" id="IPR028909">
    <property type="entry name" value="bL21-like"/>
</dbReference>
<dbReference type="InterPro" id="IPR036164">
    <property type="entry name" value="bL21-like_sf"/>
</dbReference>
<dbReference type="InterPro" id="IPR001787">
    <property type="entry name" value="Ribosomal_bL21"/>
</dbReference>
<dbReference type="InterPro" id="IPR018258">
    <property type="entry name" value="Ribosomal_bL21_CS"/>
</dbReference>
<dbReference type="NCBIfam" id="TIGR00061">
    <property type="entry name" value="L21"/>
    <property type="match status" value="1"/>
</dbReference>
<dbReference type="PANTHER" id="PTHR21349">
    <property type="entry name" value="50S RIBOSOMAL PROTEIN L21"/>
    <property type="match status" value="1"/>
</dbReference>
<dbReference type="PANTHER" id="PTHR21349:SF0">
    <property type="entry name" value="LARGE RIBOSOMAL SUBUNIT PROTEIN BL21M"/>
    <property type="match status" value="1"/>
</dbReference>
<dbReference type="Pfam" id="PF00829">
    <property type="entry name" value="Ribosomal_L21p"/>
    <property type="match status" value="1"/>
</dbReference>
<dbReference type="SUPFAM" id="SSF141091">
    <property type="entry name" value="L21p-like"/>
    <property type="match status" value="1"/>
</dbReference>
<dbReference type="PROSITE" id="PS01169">
    <property type="entry name" value="RIBOSOMAL_L21"/>
    <property type="match status" value="1"/>
</dbReference>
<organism>
    <name type="scientific">Prochlorococcus marinus (strain SARG / CCMP1375 / SS120)</name>
    <dbReference type="NCBI Taxonomy" id="167539"/>
    <lineage>
        <taxon>Bacteria</taxon>
        <taxon>Bacillati</taxon>
        <taxon>Cyanobacteriota</taxon>
        <taxon>Cyanophyceae</taxon>
        <taxon>Synechococcales</taxon>
        <taxon>Prochlorococcaceae</taxon>
        <taxon>Prochlorococcus</taxon>
    </lineage>
</organism>